<keyword id="KW-0997">Cell inner membrane</keyword>
<keyword id="KW-1003">Cell membrane</keyword>
<keyword id="KW-0407">Ion channel</keyword>
<keyword id="KW-0406">Ion transport</keyword>
<keyword id="KW-0472">Membrane</keyword>
<keyword id="KW-0479">Metal-binding</keyword>
<keyword id="KW-0915">Sodium</keyword>
<keyword id="KW-0812">Transmembrane</keyword>
<keyword id="KW-1133">Transmembrane helix</keyword>
<keyword id="KW-0813">Transport</keyword>
<organism>
    <name type="scientific">Aliivibrio salmonicida (strain LFI1238)</name>
    <name type="common">Vibrio salmonicida (strain LFI1238)</name>
    <dbReference type="NCBI Taxonomy" id="316275"/>
    <lineage>
        <taxon>Bacteria</taxon>
        <taxon>Pseudomonadati</taxon>
        <taxon>Pseudomonadota</taxon>
        <taxon>Gammaproteobacteria</taxon>
        <taxon>Vibrionales</taxon>
        <taxon>Vibrionaceae</taxon>
        <taxon>Aliivibrio</taxon>
    </lineage>
</organism>
<feature type="chain" id="PRO_1000189706" description="Fluoride-specific ion channel FluC">
    <location>
        <begin position="1"/>
        <end position="126"/>
    </location>
</feature>
<feature type="transmembrane region" description="Helical" evidence="1">
    <location>
        <begin position="4"/>
        <end position="24"/>
    </location>
</feature>
<feature type="transmembrane region" description="Helical" evidence="1">
    <location>
        <begin position="35"/>
        <end position="55"/>
    </location>
</feature>
<feature type="transmembrane region" description="Helical" evidence="1">
    <location>
        <begin position="71"/>
        <end position="91"/>
    </location>
</feature>
<feature type="transmembrane region" description="Helical" evidence="1">
    <location>
        <begin position="104"/>
        <end position="124"/>
    </location>
</feature>
<feature type="binding site" evidence="1">
    <location>
        <position position="78"/>
    </location>
    <ligand>
        <name>Na(+)</name>
        <dbReference type="ChEBI" id="CHEBI:29101"/>
        <note>structural</note>
    </ligand>
</feature>
<feature type="binding site" evidence="1">
    <location>
        <position position="81"/>
    </location>
    <ligand>
        <name>Na(+)</name>
        <dbReference type="ChEBI" id="CHEBI:29101"/>
        <note>structural</note>
    </ligand>
</feature>
<dbReference type="EMBL" id="FM178379">
    <property type="protein sequence ID" value="CAQ80665.1"/>
    <property type="molecule type" value="Genomic_DNA"/>
</dbReference>
<dbReference type="RefSeq" id="WP_012551382.1">
    <property type="nucleotide sequence ID" value="NC_011312.1"/>
</dbReference>
<dbReference type="SMR" id="B6EGU9"/>
<dbReference type="KEGG" id="vsa:VSAL_I2981"/>
<dbReference type="eggNOG" id="COG0239">
    <property type="taxonomic scope" value="Bacteria"/>
</dbReference>
<dbReference type="HOGENOM" id="CLU_114342_2_3_6"/>
<dbReference type="Proteomes" id="UP000001730">
    <property type="component" value="Chromosome 1"/>
</dbReference>
<dbReference type="GO" id="GO:0005886">
    <property type="term" value="C:plasma membrane"/>
    <property type="evidence" value="ECO:0007669"/>
    <property type="project" value="UniProtKB-SubCell"/>
</dbReference>
<dbReference type="GO" id="GO:0062054">
    <property type="term" value="F:fluoride channel activity"/>
    <property type="evidence" value="ECO:0007669"/>
    <property type="project" value="UniProtKB-UniRule"/>
</dbReference>
<dbReference type="GO" id="GO:0046872">
    <property type="term" value="F:metal ion binding"/>
    <property type="evidence" value="ECO:0007669"/>
    <property type="project" value="UniProtKB-KW"/>
</dbReference>
<dbReference type="GO" id="GO:0140114">
    <property type="term" value="P:cellular detoxification of fluoride"/>
    <property type="evidence" value="ECO:0007669"/>
    <property type="project" value="UniProtKB-UniRule"/>
</dbReference>
<dbReference type="HAMAP" id="MF_00454">
    <property type="entry name" value="FluC"/>
    <property type="match status" value="1"/>
</dbReference>
<dbReference type="InterPro" id="IPR003691">
    <property type="entry name" value="FluC"/>
</dbReference>
<dbReference type="NCBIfam" id="TIGR00494">
    <property type="entry name" value="crcB"/>
    <property type="match status" value="1"/>
</dbReference>
<dbReference type="NCBIfam" id="NF010796">
    <property type="entry name" value="PRK14200.1"/>
    <property type="match status" value="1"/>
</dbReference>
<dbReference type="PANTHER" id="PTHR28259">
    <property type="entry name" value="FLUORIDE EXPORT PROTEIN 1-RELATED"/>
    <property type="match status" value="1"/>
</dbReference>
<dbReference type="PANTHER" id="PTHR28259:SF1">
    <property type="entry name" value="FLUORIDE EXPORT PROTEIN 1-RELATED"/>
    <property type="match status" value="1"/>
</dbReference>
<dbReference type="Pfam" id="PF02537">
    <property type="entry name" value="CRCB"/>
    <property type="match status" value="1"/>
</dbReference>
<evidence type="ECO:0000255" key="1">
    <source>
        <dbReference type="HAMAP-Rule" id="MF_00454"/>
    </source>
</evidence>
<gene>
    <name evidence="1" type="primary">fluC</name>
    <name evidence="1" type="synonym">crcB</name>
    <name type="ordered locus">VSAL_I2981</name>
</gene>
<accession>B6EGU9</accession>
<sequence>MNQFMLLGFIAFGGAFGACARYLISELCVVLLGKGFPYGTLTVNIVGSLIMGVLMSSLNQGIIEAAPCRPIIGLGFLGALTTFSTFSMDNVILMQQGEVIKAGLNILLNVTLSITACFIGFQLMKS</sequence>
<name>FLUC_ALISL</name>
<proteinExistence type="inferred from homology"/>
<protein>
    <recommendedName>
        <fullName evidence="1">Fluoride-specific ion channel FluC</fullName>
    </recommendedName>
</protein>
<reference key="1">
    <citation type="journal article" date="2008" name="BMC Genomics">
        <title>The genome sequence of the fish pathogen Aliivibrio salmonicida strain LFI1238 shows extensive evidence of gene decay.</title>
        <authorList>
            <person name="Hjerde E."/>
            <person name="Lorentzen M.S."/>
            <person name="Holden M.T."/>
            <person name="Seeger K."/>
            <person name="Paulsen S."/>
            <person name="Bason N."/>
            <person name="Churcher C."/>
            <person name="Harris D."/>
            <person name="Norbertczak H."/>
            <person name="Quail M.A."/>
            <person name="Sanders S."/>
            <person name="Thurston S."/>
            <person name="Parkhill J."/>
            <person name="Willassen N.P."/>
            <person name="Thomson N.R."/>
        </authorList>
    </citation>
    <scope>NUCLEOTIDE SEQUENCE [LARGE SCALE GENOMIC DNA]</scope>
    <source>
        <strain>LFI1238</strain>
    </source>
</reference>
<comment type="function">
    <text evidence="1">Fluoride-specific ion channel. Important for reducing fluoride concentration in the cell, thus reducing its toxicity.</text>
</comment>
<comment type="catalytic activity">
    <reaction evidence="1">
        <text>fluoride(in) = fluoride(out)</text>
        <dbReference type="Rhea" id="RHEA:76159"/>
        <dbReference type="ChEBI" id="CHEBI:17051"/>
    </reaction>
    <physiologicalReaction direction="left-to-right" evidence="1">
        <dbReference type="Rhea" id="RHEA:76160"/>
    </physiologicalReaction>
</comment>
<comment type="activity regulation">
    <text evidence="1">Na(+) is not transported, but it plays an essential structural role and its presence is essential for fluoride channel function.</text>
</comment>
<comment type="subcellular location">
    <subcellularLocation>
        <location evidence="1">Cell inner membrane</location>
        <topology evidence="1">Multi-pass membrane protein</topology>
    </subcellularLocation>
</comment>
<comment type="similarity">
    <text evidence="1">Belongs to the fluoride channel Fluc/FEX (TC 1.A.43) family.</text>
</comment>